<protein>
    <recommendedName>
        <fullName evidence="1">Light-independent protochlorophyllide reductase iron-sulfur ATP-binding protein</fullName>
        <shortName evidence="1">DPOR subunit L</shortName>
        <shortName evidence="1">LI-POR subunit L</shortName>
        <ecNumber evidence="1">1.3.7.7</ecNumber>
    </recommendedName>
</protein>
<name>BCHL_CHLL2</name>
<gene>
    <name evidence="1" type="primary">bchL</name>
    <name type="ordered locus">Clim_2192</name>
</gene>
<keyword id="KW-0004">4Fe-4S</keyword>
<keyword id="KW-0067">ATP-binding</keyword>
<keyword id="KW-0077">Bacteriochlorophyll biosynthesis</keyword>
<keyword id="KW-0149">Chlorophyll biosynthesis</keyword>
<keyword id="KW-0408">Iron</keyword>
<keyword id="KW-0411">Iron-sulfur</keyword>
<keyword id="KW-0460">Magnesium</keyword>
<keyword id="KW-0479">Metal-binding</keyword>
<keyword id="KW-0547">Nucleotide-binding</keyword>
<keyword id="KW-0560">Oxidoreductase</keyword>
<keyword id="KW-0602">Photosynthesis</keyword>
<organism>
    <name type="scientific">Chlorobium limicola (strain DSM 245 / NBRC 103803 / 6330)</name>
    <dbReference type="NCBI Taxonomy" id="290315"/>
    <lineage>
        <taxon>Bacteria</taxon>
        <taxon>Pseudomonadati</taxon>
        <taxon>Chlorobiota</taxon>
        <taxon>Chlorobiia</taxon>
        <taxon>Chlorobiales</taxon>
        <taxon>Chlorobiaceae</taxon>
        <taxon>Chlorobium/Pelodictyon group</taxon>
        <taxon>Chlorobium</taxon>
    </lineage>
</organism>
<sequence>MSLVLAVYGKGGIGKSTTSANISAALALKGAKVLQIGCDPKHDSTFPITGKLQKTVIEALEEVDFHHEELTADDVIETGFAGIDGLEAGGPPAGSGCGGYVVGESVTLLQELGLYDKYDVILFDVLGDVVCGGFSAPLNYADYAIIIATNDFDSIFAANRLCMAIQQKSVRYKVKLAGIVANRVDYTTGGGTNMLDQFAEKVGTRLLAKVPYHELIRKSRFAGKTLFAMEDQPGKDDCLVPYNEIADFLMQENPAATVPVPIGDREIFSMVGGWQ</sequence>
<comment type="function">
    <text evidence="1">Component of the dark-operative protochlorophyllide reductase (DPOR) that uses Mg-ATP and reduced ferredoxin to reduce ring D of protochlorophyllide (Pchlide) to form chlorophyllide a (Chlide). This reaction is light-independent. The L component serves as a unique electron donor to the NB-component of the complex, and binds Mg-ATP.</text>
</comment>
<comment type="catalytic activity">
    <reaction evidence="1">
        <text>chlorophyllide a + oxidized 2[4Fe-4S]-[ferredoxin] + 2 ADP + 2 phosphate = protochlorophyllide a + reduced 2[4Fe-4S]-[ferredoxin] + 2 ATP + 2 H2O</text>
        <dbReference type="Rhea" id="RHEA:28202"/>
        <dbReference type="Rhea" id="RHEA-COMP:10002"/>
        <dbReference type="Rhea" id="RHEA-COMP:10004"/>
        <dbReference type="ChEBI" id="CHEBI:15377"/>
        <dbReference type="ChEBI" id="CHEBI:30616"/>
        <dbReference type="ChEBI" id="CHEBI:33722"/>
        <dbReference type="ChEBI" id="CHEBI:33723"/>
        <dbReference type="ChEBI" id="CHEBI:43474"/>
        <dbReference type="ChEBI" id="CHEBI:83348"/>
        <dbReference type="ChEBI" id="CHEBI:83350"/>
        <dbReference type="ChEBI" id="CHEBI:456216"/>
        <dbReference type="EC" id="1.3.7.7"/>
    </reaction>
</comment>
<comment type="cofactor">
    <cofactor evidence="1">
        <name>[4Fe-4S] cluster</name>
        <dbReference type="ChEBI" id="CHEBI:49883"/>
    </cofactor>
    <text evidence="1">Binds 1 [4Fe-4S] cluster per dimer.</text>
</comment>
<comment type="pathway">
    <text evidence="1">Porphyrin-containing compound metabolism; bacteriochlorophyll biosynthesis (light-independent).</text>
</comment>
<comment type="subunit">
    <text evidence="1">Homodimer. Protochlorophyllide reductase is composed of three subunits; BchL, BchN and BchB.</text>
</comment>
<comment type="similarity">
    <text evidence="1">Belongs to the NifH/BchL/ChlL family.</text>
</comment>
<accession>B3EGV3</accession>
<reference key="1">
    <citation type="submission" date="2008-05" db="EMBL/GenBank/DDBJ databases">
        <title>Complete sequence of Chlorobium limicola DSM 245.</title>
        <authorList>
            <consortium name="US DOE Joint Genome Institute"/>
            <person name="Lucas S."/>
            <person name="Copeland A."/>
            <person name="Lapidus A."/>
            <person name="Glavina del Rio T."/>
            <person name="Dalin E."/>
            <person name="Tice H."/>
            <person name="Bruce D."/>
            <person name="Goodwin L."/>
            <person name="Pitluck S."/>
            <person name="Schmutz J."/>
            <person name="Larimer F."/>
            <person name="Land M."/>
            <person name="Hauser L."/>
            <person name="Kyrpides N."/>
            <person name="Ovchinnikova G."/>
            <person name="Zhao F."/>
            <person name="Li T."/>
            <person name="Liu Z."/>
            <person name="Overmann J."/>
            <person name="Bryant D.A."/>
            <person name="Richardson P."/>
        </authorList>
    </citation>
    <scope>NUCLEOTIDE SEQUENCE [LARGE SCALE GENOMIC DNA]</scope>
    <source>
        <strain>DSM 245 / NBRC 103803 / 6330</strain>
    </source>
</reference>
<dbReference type="EC" id="1.3.7.7" evidence="1"/>
<dbReference type="EMBL" id="CP001097">
    <property type="protein sequence ID" value="ACD91216.1"/>
    <property type="molecule type" value="Genomic_DNA"/>
</dbReference>
<dbReference type="RefSeq" id="WP_012467084.1">
    <property type="nucleotide sequence ID" value="NC_010803.1"/>
</dbReference>
<dbReference type="SMR" id="B3EGV3"/>
<dbReference type="STRING" id="290315.Clim_2192"/>
<dbReference type="KEGG" id="cli:Clim_2192"/>
<dbReference type="eggNOG" id="COG1348">
    <property type="taxonomic scope" value="Bacteria"/>
</dbReference>
<dbReference type="HOGENOM" id="CLU_059373_2_0_10"/>
<dbReference type="OrthoDB" id="9778641at2"/>
<dbReference type="UniPathway" id="UPA00671"/>
<dbReference type="Proteomes" id="UP000008841">
    <property type="component" value="Chromosome"/>
</dbReference>
<dbReference type="GO" id="GO:0051539">
    <property type="term" value="F:4 iron, 4 sulfur cluster binding"/>
    <property type="evidence" value="ECO:0007669"/>
    <property type="project" value="UniProtKB-UniRule"/>
</dbReference>
<dbReference type="GO" id="GO:0005524">
    <property type="term" value="F:ATP binding"/>
    <property type="evidence" value="ECO:0007669"/>
    <property type="project" value="UniProtKB-UniRule"/>
</dbReference>
<dbReference type="GO" id="GO:0046872">
    <property type="term" value="F:metal ion binding"/>
    <property type="evidence" value="ECO:0007669"/>
    <property type="project" value="UniProtKB-KW"/>
</dbReference>
<dbReference type="GO" id="GO:0016730">
    <property type="term" value="F:oxidoreductase activity, acting on iron-sulfur proteins as donors"/>
    <property type="evidence" value="ECO:0007669"/>
    <property type="project" value="InterPro"/>
</dbReference>
<dbReference type="GO" id="GO:0016636">
    <property type="term" value="F:oxidoreductase activity, acting on the CH-CH group of donors, iron-sulfur protein as acceptor"/>
    <property type="evidence" value="ECO:0007669"/>
    <property type="project" value="UniProtKB-UniRule"/>
</dbReference>
<dbReference type="GO" id="GO:0036070">
    <property type="term" value="P:light-independent bacteriochlorophyll biosynthetic process"/>
    <property type="evidence" value="ECO:0007669"/>
    <property type="project" value="UniProtKB-UniRule"/>
</dbReference>
<dbReference type="GO" id="GO:0019685">
    <property type="term" value="P:photosynthesis, dark reaction"/>
    <property type="evidence" value="ECO:0007669"/>
    <property type="project" value="InterPro"/>
</dbReference>
<dbReference type="Gene3D" id="3.40.50.300">
    <property type="entry name" value="P-loop containing nucleotide triphosphate hydrolases"/>
    <property type="match status" value="1"/>
</dbReference>
<dbReference type="HAMAP" id="MF_00355">
    <property type="entry name" value="ChlL_BchL"/>
    <property type="match status" value="1"/>
</dbReference>
<dbReference type="InterPro" id="IPR030655">
    <property type="entry name" value="NifH/chlL_CS"/>
</dbReference>
<dbReference type="InterPro" id="IPR000392">
    <property type="entry name" value="NifH/frxC"/>
</dbReference>
<dbReference type="InterPro" id="IPR027417">
    <property type="entry name" value="P-loop_NTPase"/>
</dbReference>
<dbReference type="InterPro" id="IPR005971">
    <property type="entry name" value="Protochlorophyllide_ATP-bd"/>
</dbReference>
<dbReference type="NCBIfam" id="TIGR01281">
    <property type="entry name" value="DPOR_bchL"/>
    <property type="match status" value="1"/>
</dbReference>
<dbReference type="PANTHER" id="PTHR42864">
    <property type="entry name" value="LIGHT-INDEPENDENT PROTOCHLOROPHYLLIDE REDUCTASE IRON-SULFUR ATP-BINDING PROTEIN"/>
    <property type="match status" value="1"/>
</dbReference>
<dbReference type="PANTHER" id="PTHR42864:SF2">
    <property type="entry name" value="LIGHT-INDEPENDENT PROTOCHLOROPHYLLIDE REDUCTASE IRON-SULFUR ATP-BINDING PROTEIN"/>
    <property type="match status" value="1"/>
</dbReference>
<dbReference type="Pfam" id="PF00142">
    <property type="entry name" value="Fer4_NifH"/>
    <property type="match status" value="1"/>
</dbReference>
<dbReference type="PIRSF" id="PIRSF000363">
    <property type="entry name" value="Nitrogenase_iron"/>
    <property type="match status" value="1"/>
</dbReference>
<dbReference type="PRINTS" id="PR00091">
    <property type="entry name" value="NITROGNASEII"/>
</dbReference>
<dbReference type="SUPFAM" id="SSF52540">
    <property type="entry name" value="P-loop containing nucleoside triphosphate hydrolases"/>
    <property type="match status" value="1"/>
</dbReference>
<dbReference type="PROSITE" id="PS00746">
    <property type="entry name" value="NIFH_FRXC_1"/>
    <property type="match status" value="1"/>
</dbReference>
<dbReference type="PROSITE" id="PS00692">
    <property type="entry name" value="NIFH_FRXC_2"/>
    <property type="match status" value="1"/>
</dbReference>
<dbReference type="PROSITE" id="PS51026">
    <property type="entry name" value="NIFH_FRXC_3"/>
    <property type="match status" value="1"/>
</dbReference>
<feature type="chain" id="PRO_1000120550" description="Light-independent protochlorophyllide reductase iron-sulfur ATP-binding protein">
    <location>
        <begin position="1"/>
        <end position="275"/>
    </location>
</feature>
<feature type="binding site" evidence="1">
    <location>
        <begin position="12"/>
        <end position="17"/>
    </location>
    <ligand>
        <name>ATP</name>
        <dbReference type="ChEBI" id="CHEBI:30616"/>
    </ligand>
</feature>
<feature type="binding site" evidence="1">
    <location>
        <position position="16"/>
    </location>
    <ligand>
        <name>Mg(2+)</name>
        <dbReference type="ChEBI" id="CHEBI:18420"/>
    </ligand>
</feature>
<feature type="binding site" evidence="1">
    <location>
        <position position="41"/>
    </location>
    <ligand>
        <name>ATP</name>
        <dbReference type="ChEBI" id="CHEBI:30616"/>
    </ligand>
</feature>
<feature type="binding site" evidence="1">
    <location>
        <position position="97"/>
    </location>
    <ligand>
        <name>[4Fe-4S] cluster</name>
        <dbReference type="ChEBI" id="CHEBI:49883"/>
        <note>ligand shared between dimeric partners</note>
    </ligand>
</feature>
<feature type="binding site" evidence="1">
    <location>
        <position position="131"/>
    </location>
    <ligand>
        <name>[4Fe-4S] cluster</name>
        <dbReference type="ChEBI" id="CHEBI:49883"/>
        <note>ligand shared between dimeric partners</note>
    </ligand>
</feature>
<feature type="binding site" evidence="1">
    <location>
        <begin position="182"/>
        <end position="183"/>
    </location>
    <ligand>
        <name>ATP</name>
        <dbReference type="ChEBI" id="CHEBI:30616"/>
    </ligand>
</feature>
<proteinExistence type="inferred from homology"/>
<evidence type="ECO:0000255" key="1">
    <source>
        <dbReference type="HAMAP-Rule" id="MF_00355"/>
    </source>
</evidence>